<accession>A9WXP3</accession>
<name>SYH_BRUSI</name>
<evidence type="ECO:0000255" key="1">
    <source>
        <dbReference type="HAMAP-Rule" id="MF_00127"/>
    </source>
</evidence>
<proteinExistence type="inferred from homology"/>
<dbReference type="EC" id="6.1.1.21" evidence="1"/>
<dbReference type="EMBL" id="CP000912">
    <property type="protein sequence ID" value="ABY39209.1"/>
    <property type="molecule type" value="Genomic_DNA"/>
</dbReference>
<dbReference type="RefSeq" id="WP_004688847.1">
    <property type="nucleotide sequence ID" value="NC_010167.1"/>
</dbReference>
<dbReference type="SMR" id="A9WXP3"/>
<dbReference type="KEGG" id="bmt:BSUIS_B0190"/>
<dbReference type="HOGENOM" id="CLU_025113_3_2_5"/>
<dbReference type="Proteomes" id="UP000008545">
    <property type="component" value="Chromosome II"/>
</dbReference>
<dbReference type="GO" id="GO:0005737">
    <property type="term" value="C:cytoplasm"/>
    <property type="evidence" value="ECO:0007669"/>
    <property type="project" value="UniProtKB-SubCell"/>
</dbReference>
<dbReference type="GO" id="GO:0005524">
    <property type="term" value="F:ATP binding"/>
    <property type="evidence" value="ECO:0007669"/>
    <property type="project" value="UniProtKB-UniRule"/>
</dbReference>
<dbReference type="GO" id="GO:0004821">
    <property type="term" value="F:histidine-tRNA ligase activity"/>
    <property type="evidence" value="ECO:0007669"/>
    <property type="project" value="UniProtKB-UniRule"/>
</dbReference>
<dbReference type="GO" id="GO:0006427">
    <property type="term" value="P:histidyl-tRNA aminoacylation"/>
    <property type="evidence" value="ECO:0007669"/>
    <property type="project" value="UniProtKB-UniRule"/>
</dbReference>
<dbReference type="CDD" id="cd00773">
    <property type="entry name" value="HisRS-like_core"/>
    <property type="match status" value="1"/>
</dbReference>
<dbReference type="CDD" id="cd00859">
    <property type="entry name" value="HisRS_anticodon"/>
    <property type="match status" value="1"/>
</dbReference>
<dbReference type="Gene3D" id="3.40.50.800">
    <property type="entry name" value="Anticodon-binding domain"/>
    <property type="match status" value="1"/>
</dbReference>
<dbReference type="Gene3D" id="3.30.930.10">
    <property type="entry name" value="Bira Bifunctional Protein, Domain 2"/>
    <property type="match status" value="1"/>
</dbReference>
<dbReference type="HAMAP" id="MF_00127">
    <property type="entry name" value="His_tRNA_synth"/>
    <property type="match status" value="1"/>
</dbReference>
<dbReference type="InterPro" id="IPR006195">
    <property type="entry name" value="aa-tRNA-synth_II"/>
</dbReference>
<dbReference type="InterPro" id="IPR045864">
    <property type="entry name" value="aa-tRNA-synth_II/BPL/LPL"/>
</dbReference>
<dbReference type="InterPro" id="IPR004154">
    <property type="entry name" value="Anticodon-bd"/>
</dbReference>
<dbReference type="InterPro" id="IPR036621">
    <property type="entry name" value="Anticodon-bd_dom_sf"/>
</dbReference>
<dbReference type="InterPro" id="IPR015807">
    <property type="entry name" value="His-tRNA-ligase"/>
</dbReference>
<dbReference type="InterPro" id="IPR041715">
    <property type="entry name" value="HisRS-like_core"/>
</dbReference>
<dbReference type="InterPro" id="IPR004516">
    <property type="entry name" value="HisRS/HisZ"/>
</dbReference>
<dbReference type="InterPro" id="IPR033656">
    <property type="entry name" value="HisRS_anticodon"/>
</dbReference>
<dbReference type="NCBIfam" id="TIGR00442">
    <property type="entry name" value="hisS"/>
    <property type="match status" value="1"/>
</dbReference>
<dbReference type="PANTHER" id="PTHR11476:SF7">
    <property type="entry name" value="HISTIDINE--TRNA LIGASE"/>
    <property type="match status" value="1"/>
</dbReference>
<dbReference type="PANTHER" id="PTHR11476">
    <property type="entry name" value="HISTIDYL-TRNA SYNTHETASE"/>
    <property type="match status" value="1"/>
</dbReference>
<dbReference type="Pfam" id="PF03129">
    <property type="entry name" value="HGTP_anticodon"/>
    <property type="match status" value="1"/>
</dbReference>
<dbReference type="Pfam" id="PF13393">
    <property type="entry name" value="tRNA-synt_His"/>
    <property type="match status" value="1"/>
</dbReference>
<dbReference type="PIRSF" id="PIRSF001549">
    <property type="entry name" value="His-tRNA_synth"/>
    <property type="match status" value="1"/>
</dbReference>
<dbReference type="SUPFAM" id="SSF52954">
    <property type="entry name" value="Class II aaRS ABD-related"/>
    <property type="match status" value="1"/>
</dbReference>
<dbReference type="SUPFAM" id="SSF55681">
    <property type="entry name" value="Class II aaRS and biotin synthetases"/>
    <property type="match status" value="1"/>
</dbReference>
<dbReference type="PROSITE" id="PS50862">
    <property type="entry name" value="AA_TRNA_LIGASE_II"/>
    <property type="match status" value="1"/>
</dbReference>
<keyword id="KW-0030">Aminoacyl-tRNA synthetase</keyword>
<keyword id="KW-0067">ATP-binding</keyword>
<keyword id="KW-0963">Cytoplasm</keyword>
<keyword id="KW-0436">Ligase</keyword>
<keyword id="KW-0547">Nucleotide-binding</keyword>
<keyword id="KW-0648">Protein biosynthesis</keyword>
<reference key="1">
    <citation type="submission" date="2007-12" db="EMBL/GenBank/DDBJ databases">
        <title>Brucella suis ATCC 23445 whole genome shotgun sequencing project.</title>
        <authorList>
            <person name="Setubal J.C."/>
            <person name="Bowns C."/>
            <person name="Boyle S."/>
            <person name="Crasta O.R."/>
            <person name="Czar M.J."/>
            <person name="Dharmanolla C."/>
            <person name="Gillespie J.J."/>
            <person name="Kenyon R.W."/>
            <person name="Lu J."/>
            <person name="Mane S."/>
            <person name="Mohapatra S."/>
            <person name="Nagrani S."/>
            <person name="Purkayastha A."/>
            <person name="Rajasimha H.K."/>
            <person name="Shallom J.M."/>
            <person name="Shallom S."/>
            <person name="Shukla M."/>
            <person name="Snyder E.E."/>
            <person name="Sobral B.W."/>
            <person name="Wattam A.R."/>
            <person name="Will R."/>
            <person name="Williams K."/>
            <person name="Yoo H."/>
            <person name="Bruce D."/>
            <person name="Detter C."/>
            <person name="Munk C."/>
            <person name="Brettin T.S."/>
        </authorList>
    </citation>
    <scope>NUCLEOTIDE SEQUENCE [LARGE SCALE GENOMIC DNA]</scope>
    <source>
        <strain>ATCC 23445 / NCTC 10510</strain>
    </source>
</reference>
<organism>
    <name type="scientific">Brucella suis (strain ATCC 23445 / NCTC 10510)</name>
    <dbReference type="NCBI Taxonomy" id="470137"/>
    <lineage>
        <taxon>Bacteria</taxon>
        <taxon>Pseudomonadati</taxon>
        <taxon>Pseudomonadota</taxon>
        <taxon>Alphaproteobacteria</taxon>
        <taxon>Hyphomicrobiales</taxon>
        <taxon>Brucellaceae</taxon>
        <taxon>Brucella/Ochrobactrum group</taxon>
        <taxon>Brucella</taxon>
    </lineage>
</organism>
<protein>
    <recommendedName>
        <fullName evidence="1">Histidine--tRNA ligase</fullName>
        <ecNumber evidence="1">6.1.1.21</ecNumber>
    </recommendedName>
    <alternativeName>
        <fullName evidence="1">Histidyl-tRNA synthetase</fullName>
        <shortName evidence="1">HisRS</shortName>
    </alternativeName>
</protein>
<comment type="catalytic activity">
    <reaction evidence="1">
        <text>tRNA(His) + L-histidine + ATP = L-histidyl-tRNA(His) + AMP + diphosphate + H(+)</text>
        <dbReference type="Rhea" id="RHEA:17313"/>
        <dbReference type="Rhea" id="RHEA-COMP:9665"/>
        <dbReference type="Rhea" id="RHEA-COMP:9689"/>
        <dbReference type="ChEBI" id="CHEBI:15378"/>
        <dbReference type="ChEBI" id="CHEBI:30616"/>
        <dbReference type="ChEBI" id="CHEBI:33019"/>
        <dbReference type="ChEBI" id="CHEBI:57595"/>
        <dbReference type="ChEBI" id="CHEBI:78442"/>
        <dbReference type="ChEBI" id="CHEBI:78527"/>
        <dbReference type="ChEBI" id="CHEBI:456215"/>
        <dbReference type="EC" id="6.1.1.21"/>
    </reaction>
</comment>
<comment type="subunit">
    <text evidence="1">Homodimer.</text>
</comment>
<comment type="subcellular location">
    <subcellularLocation>
        <location evidence="1">Cytoplasm</location>
    </subcellularLocation>
</comment>
<comment type="similarity">
    <text evidence="1">Belongs to the class-II aminoacyl-tRNA synthetase family.</text>
</comment>
<sequence length="502" mass="55179">MADKADKMKARLPRGFVDRVPDDLRAAEKMMATIREVYDLYGFEPVETPLVEYTDALGKFLPDQDRPNEGVFSFQDDDEQWLSLRYDLTAPLARYVAENFETLPKPYRSYRNGWVFRNEKPGPGRFRQFMQFDADTVGAPNVSADAEMCMMMADTLERLGIQRGDYAIRVNNRKVLDGVLDAIGLEGEGNAAKRLNVLRAIDKLDKFGPEGVRLLLGKGRLDESGDFTKGAQLPEAAIEKVLAFTAAGGADGAQTIANLQAVVAGNAKGEEGVQELADMQALFFAGGYEGRVKIDPSVVRGLEYYTGPVFEAELLFDVTNEDGQKVVFGSVGGGGRYDGLVSRFRGEPVPATGFSIGVSRLMTALKNLGKLDVSDTVGPVVVLVMDKDTQNLGRYQKMVSDLRKAGIRAEMYVGGSGMKAQMKYADRRAAPCVVIQGSQEREAGEVQIKDLVEGKRLSAEIEDNVTWRESRPAQITVREDGLVDAVREILDAQARDRAEQSK</sequence>
<gene>
    <name evidence="1" type="primary">hisS</name>
    <name type="ordered locus">BSUIS_B0190</name>
</gene>
<feature type="chain" id="PRO_1000076263" description="Histidine--tRNA ligase">
    <location>
        <begin position="1"/>
        <end position="502"/>
    </location>
</feature>